<name>THIC_METJA</name>
<protein>
    <recommendedName>
        <fullName evidence="1">Phosphomethylpyrimidine synthase</fullName>
        <ecNumber evidence="1">4.1.99.17</ecNumber>
    </recommendedName>
    <alternativeName>
        <fullName evidence="1">Hydroxymethylpyrimidine phosphate synthase</fullName>
        <shortName evidence="1">HMP-P synthase</shortName>
        <shortName evidence="1">HMP-phosphate synthase</shortName>
        <shortName evidence="1">HMPP synthase</shortName>
    </alternativeName>
    <alternativeName>
        <fullName evidence="1">Thiamine biosynthesis protein ThiC</fullName>
    </alternativeName>
</protein>
<feature type="chain" id="PRO_0000152862" description="Phosphomethylpyrimidine synthase">
    <location>
        <begin position="1"/>
        <end position="426"/>
    </location>
</feature>
<feature type="binding site" evidence="1">
    <location>
        <position position="65"/>
    </location>
    <ligand>
        <name>substrate</name>
    </ligand>
</feature>
<feature type="binding site" evidence="1">
    <location>
        <position position="94"/>
    </location>
    <ligand>
        <name>substrate</name>
    </ligand>
</feature>
<feature type="binding site" evidence="1">
    <location>
        <position position="123"/>
    </location>
    <ligand>
        <name>substrate</name>
    </ligand>
</feature>
<feature type="binding site" evidence="1">
    <location>
        <position position="162"/>
    </location>
    <ligand>
        <name>substrate</name>
    </ligand>
</feature>
<feature type="binding site" evidence="1">
    <location>
        <begin position="184"/>
        <end position="186"/>
    </location>
    <ligand>
        <name>substrate</name>
    </ligand>
</feature>
<feature type="binding site" evidence="1">
    <location>
        <begin position="225"/>
        <end position="228"/>
    </location>
    <ligand>
        <name>substrate</name>
    </ligand>
</feature>
<feature type="binding site" evidence="1">
    <location>
        <position position="264"/>
    </location>
    <ligand>
        <name>substrate</name>
    </ligand>
</feature>
<feature type="binding site" evidence="1">
    <location>
        <position position="268"/>
    </location>
    <ligand>
        <name>Zn(2+)</name>
        <dbReference type="ChEBI" id="CHEBI:29105"/>
    </ligand>
</feature>
<feature type="binding site" evidence="1">
    <location>
        <position position="291"/>
    </location>
    <ligand>
        <name>substrate</name>
    </ligand>
</feature>
<feature type="binding site" evidence="1">
    <location>
        <position position="332"/>
    </location>
    <ligand>
        <name>Zn(2+)</name>
        <dbReference type="ChEBI" id="CHEBI:29105"/>
    </ligand>
</feature>
<feature type="binding site" evidence="1">
    <location>
        <position position="408"/>
    </location>
    <ligand>
        <name>[4Fe-4S] cluster</name>
        <dbReference type="ChEBI" id="CHEBI:49883"/>
        <note>4Fe-4S-S-AdoMet</note>
    </ligand>
</feature>
<feature type="binding site" evidence="1">
    <location>
        <position position="411"/>
    </location>
    <ligand>
        <name>[4Fe-4S] cluster</name>
        <dbReference type="ChEBI" id="CHEBI:49883"/>
        <note>4Fe-4S-S-AdoMet</note>
    </ligand>
</feature>
<feature type="binding site" evidence="1">
    <location>
        <position position="415"/>
    </location>
    <ligand>
        <name>[4Fe-4S] cluster</name>
        <dbReference type="ChEBI" id="CHEBI:49883"/>
        <note>4Fe-4S-S-AdoMet</note>
    </ligand>
</feature>
<keyword id="KW-0004">4Fe-4S</keyword>
<keyword id="KW-0408">Iron</keyword>
<keyword id="KW-0411">Iron-sulfur</keyword>
<keyword id="KW-0456">Lyase</keyword>
<keyword id="KW-0479">Metal-binding</keyword>
<keyword id="KW-1185">Reference proteome</keyword>
<keyword id="KW-0949">S-adenosyl-L-methionine</keyword>
<keyword id="KW-0784">Thiamine biosynthesis</keyword>
<keyword id="KW-0862">Zinc</keyword>
<gene>
    <name evidence="1" type="primary">thiC</name>
    <name type="ordered locus">MJ1026</name>
</gene>
<reference key="1">
    <citation type="journal article" date="1996" name="Science">
        <title>Complete genome sequence of the methanogenic archaeon, Methanococcus jannaschii.</title>
        <authorList>
            <person name="Bult C.J."/>
            <person name="White O."/>
            <person name="Olsen G.J."/>
            <person name="Zhou L."/>
            <person name="Fleischmann R.D."/>
            <person name="Sutton G.G."/>
            <person name="Blake J.A."/>
            <person name="FitzGerald L.M."/>
            <person name="Clayton R.A."/>
            <person name="Gocayne J.D."/>
            <person name="Kerlavage A.R."/>
            <person name="Dougherty B.A."/>
            <person name="Tomb J.-F."/>
            <person name="Adams M.D."/>
            <person name="Reich C.I."/>
            <person name="Overbeek R."/>
            <person name="Kirkness E.F."/>
            <person name="Weinstock K.G."/>
            <person name="Merrick J.M."/>
            <person name="Glodek A."/>
            <person name="Scott J.L."/>
            <person name="Geoghagen N.S.M."/>
            <person name="Weidman J.F."/>
            <person name="Fuhrmann J.L."/>
            <person name="Nguyen D."/>
            <person name="Utterback T.R."/>
            <person name="Kelley J.M."/>
            <person name="Peterson J.D."/>
            <person name="Sadow P.W."/>
            <person name="Hanna M.C."/>
            <person name="Cotton M.D."/>
            <person name="Roberts K.M."/>
            <person name="Hurst M.A."/>
            <person name="Kaine B.P."/>
            <person name="Borodovsky M."/>
            <person name="Klenk H.-P."/>
            <person name="Fraser C.M."/>
            <person name="Smith H.O."/>
            <person name="Woese C.R."/>
            <person name="Venter J.C."/>
        </authorList>
    </citation>
    <scope>NUCLEOTIDE SEQUENCE [LARGE SCALE GENOMIC DNA]</scope>
    <source>
        <strain>ATCC 43067 / DSM 2661 / JAL-1 / JCM 10045 / NBRC 100440</strain>
    </source>
</reference>
<comment type="function">
    <text evidence="1">Catalyzes the synthesis of the hydroxymethylpyrimidine phosphate (HMP-P) moiety of thiamine from aminoimidazole ribotide (AIR) in a radical S-adenosyl-L-methionine (SAM)-dependent reaction.</text>
</comment>
<comment type="catalytic activity">
    <reaction evidence="1">
        <text>5-amino-1-(5-phospho-beta-D-ribosyl)imidazole + S-adenosyl-L-methionine = 4-amino-2-methyl-5-(phosphooxymethyl)pyrimidine + CO + 5'-deoxyadenosine + formate + L-methionine + 3 H(+)</text>
        <dbReference type="Rhea" id="RHEA:24840"/>
        <dbReference type="ChEBI" id="CHEBI:15378"/>
        <dbReference type="ChEBI" id="CHEBI:15740"/>
        <dbReference type="ChEBI" id="CHEBI:17245"/>
        <dbReference type="ChEBI" id="CHEBI:17319"/>
        <dbReference type="ChEBI" id="CHEBI:57844"/>
        <dbReference type="ChEBI" id="CHEBI:58354"/>
        <dbReference type="ChEBI" id="CHEBI:59789"/>
        <dbReference type="ChEBI" id="CHEBI:137981"/>
        <dbReference type="EC" id="4.1.99.17"/>
    </reaction>
</comment>
<comment type="cofactor">
    <cofactor evidence="1">
        <name>[4Fe-4S] cluster</name>
        <dbReference type="ChEBI" id="CHEBI:49883"/>
    </cofactor>
    <text evidence="1">Binds 1 [4Fe-4S] cluster per subunit. The cluster is coordinated with 3 cysteines and an exchangeable S-adenosyl-L-methionine.</text>
</comment>
<comment type="pathway">
    <text evidence="1">Cofactor biosynthesis; thiamine diphosphate biosynthesis.</text>
</comment>
<comment type="similarity">
    <text evidence="1">Belongs to the ThiC family.</text>
</comment>
<comment type="sequence caution" evidence="2">
    <conflict type="erroneous initiation">
        <sequence resource="EMBL-CDS" id="AAB99030"/>
    </conflict>
</comment>
<proteinExistence type="inferred from homology"/>
<evidence type="ECO:0000255" key="1">
    <source>
        <dbReference type="HAMAP-Rule" id="MF_00089"/>
    </source>
</evidence>
<evidence type="ECO:0000305" key="2"/>
<sequence length="426" mass="47477">MTQMDDAKNGIITEEMKIVAEKEKIDIEKLRKLIAKGYVVILKNVNRDTNPVGIGQSLRTKVNANIGTSPDCVDIELEIKKAKIAEKYGADAVMDLSTGGNLEEIRKAIMDAVKIPIGTVPIYEVGKLAREKYGRVIDMNEDLMFKVIEKQAKEGVDFMTLHCGITKQSVERLKRSGRIMGVVSRGGAFLTAYILYHNEENPLYKNFDYLLDILKEHDVTISLGDGMRPGCLADNTDRAQIEELITLGELVERCREKGVQCMVEGPGHIPINYIETNIRLQKSLCKNAPFYVLGPIVTDIAPGYDHITAAIGGALAGYYGADFLCYVTPSEHLRLPTIEDVKEGVIATKIAAQAADVAKGNKLAWEKETEMAYARKNHDWEKQFELAIDKEKARKMREEIPSKEEKACSICGDYCALLMVEELGKR</sequence>
<accession>Q58432</accession>
<dbReference type="EC" id="4.1.99.17" evidence="1"/>
<dbReference type="EMBL" id="L77117">
    <property type="protein sequence ID" value="AAB99030.1"/>
    <property type="status" value="ALT_INIT"/>
    <property type="molecule type" value="Genomic_DNA"/>
</dbReference>
<dbReference type="PIR" id="A64428">
    <property type="entry name" value="A64428"/>
</dbReference>
<dbReference type="RefSeq" id="WP_010870539.1">
    <property type="nucleotide sequence ID" value="NC_000909.1"/>
</dbReference>
<dbReference type="SMR" id="Q58432"/>
<dbReference type="FunCoup" id="Q58432">
    <property type="interactions" value="146"/>
</dbReference>
<dbReference type="STRING" id="243232.MJ_1026"/>
<dbReference type="PaxDb" id="243232-MJ_1026"/>
<dbReference type="EnsemblBacteria" id="AAB99030">
    <property type="protein sequence ID" value="AAB99030"/>
    <property type="gene ID" value="MJ_1026"/>
</dbReference>
<dbReference type="GeneID" id="1451923"/>
<dbReference type="KEGG" id="mja:MJ_1026"/>
<dbReference type="eggNOG" id="arCOG02741">
    <property type="taxonomic scope" value="Archaea"/>
</dbReference>
<dbReference type="HOGENOM" id="CLU_013181_2_2_2"/>
<dbReference type="InParanoid" id="Q58432"/>
<dbReference type="OrthoDB" id="335406at2157"/>
<dbReference type="PhylomeDB" id="Q58432"/>
<dbReference type="UniPathway" id="UPA00060"/>
<dbReference type="Proteomes" id="UP000000805">
    <property type="component" value="Chromosome"/>
</dbReference>
<dbReference type="GO" id="GO:0051539">
    <property type="term" value="F:4 iron, 4 sulfur cluster binding"/>
    <property type="evidence" value="ECO:0007669"/>
    <property type="project" value="UniProtKB-KW"/>
</dbReference>
<dbReference type="GO" id="GO:0016830">
    <property type="term" value="F:carbon-carbon lyase activity"/>
    <property type="evidence" value="ECO:0007669"/>
    <property type="project" value="InterPro"/>
</dbReference>
<dbReference type="GO" id="GO:0008270">
    <property type="term" value="F:zinc ion binding"/>
    <property type="evidence" value="ECO:0007669"/>
    <property type="project" value="UniProtKB-UniRule"/>
</dbReference>
<dbReference type="GO" id="GO:0009228">
    <property type="term" value="P:thiamine biosynthetic process"/>
    <property type="evidence" value="ECO:0007669"/>
    <property type="project" value="UniProtKB-KW"/>
</dbReference>
<dbReference type="GO" id="GO:0009229">
    <property type="term" value="P:thiamine diphosphate biosynthetic process"/>
    <property type="evidence" value="ECO:0007669"/>
    <property type="project" value="UniProtKB-UniRule"/>
</dbReference>
<dbReference type="FunFam" id="3.20.20.540:FF:000001">
    <property type="entry name" value="Phosphomethylpyrimidine synthase"/>
    <property type="match status" value="1"/>
</dbReference>
<dbReference type="Gene3D" id="6.10.250.620">
    <property type="match status" value="1"/>
</dbReference>
<dbReference type="Gene3D" id="3.20.20.540">
    <property type="entry name" value="Radical SAM ThiC family, central domain"/>
    <property type="match status" value="1"/>
</dbReference>
<dbReference type="HAMAP" id="MF_00089">
    <property type="entry name" value="ThiC"/>
    <property type="match status" value="1"/>
</dbReference>
<dbReference type="InterPro" id="IPR037509">
    <property type="entry name" value="ThiC"/>
</dbReference>
<dbReference type="InterPro" id="IPR038521">
    <property type="entry name" value="ThiC/Bza_core_dom"/>
</dbReference>
<dbReference type="InterPro" id="IPR002817">
    <property type="entry name" value="ThiC/BzaA/B"/>
</dbReference>
<dbReference type="NCBIfam" id="NF009895">
    <property type="entry name" value="PRK13352.1"/>
    <property type="match status" value="1"/>
</dbReference>
<dbReference type="NCBIfam" id="TIGR00190">
    <property type="entry name" value="thiC"/>
    <property type="match status" value="1"/>
</dbReference>
<dbReference type="PANTHER" id="PTHR30557:SF1">
    <property type="entry name" value="PHOSPHOMETHYLPYRIMIDINE SYNTHASE, CHLOROPLASTIC"/>
    <property type="match status" value="1"/>
</dbReference>
<dbReference type="PANTHER" id="PTHR30557">
    <property type="entry name" value="THIAMINE BIOSYNTHESIS PROTEIN THIC"/>
    <property type="match status" value="1"/>
</dbReference>
<dbReference type="Pfam" id="PF01964">
    <property type="entry name" value="ThiC_Rad_SAM"/>
    <property type="match status" value="1"/>
</dbReference>
<dbReference type="SFLD" id="SFLDF00407">
    <property type="entry name" value="phosphomethylpyrimidine_syntha"/>
    <property type="match status" value="1"/>
</dbReference>
<dbReference type="SFLD" id="SFLDG01114">
    <property type="entry name" value="phosphomethylpyrimidine_syntha"/>
    <property type="match status" value="1"/>
</dbReference>
<dbReference type="SFLD" id="SFLDS00113">
    <property type="entry name" value="Radical_SAM_Phosphomethylpyrim"/>
    <property type="match status" value="1"/>
</dbReference>
<organism>
    <name type="scientific">Methanocaldococcus jannaschii (strain ATCC 43067 / DSM 2661 / JAL-1 / JCM 10045 / NBRC 100440)</name>
    <name type="common">Methanococcus jannaschii</name>
    <dbReference type="NCBI Taxonomy" id="243232"/>
    <lineage>
        <taxon>Archaea</taxon>
        <taxon>Methanobacteriati</taxon>
        <taxon>Methanobacteriota</taxon>
        <taxon>Methanomada group</taxon>
        <taxon>Methanococci</taxon>
        <taxon>Methanococcales</taxon>
        <taxon>Methanocaldococcaceae</taxon>
        <taxon>Methanocaldococcus</taxon>
    </lineage>
</organism>